<organism>
    <name type="scientific">Saccharomyces cerevisiae (strain ATCC 204508 / S288c)</name>
    <name type="common">Baker's yeast</name>
    <dbReference type="NCBI Taxonomy" id="559292"/>
    <lineage>
        <taxon>Eukaryota</taxon>
        <taxon>Fungi</taxon>
        <taxon>Dikarya</taxon>
        <taxon>Ascomycota</taxon>
        <taxon>Saccharomycotina</taxon>
        <taxon>Saccharomycetes</taxon>
        <taxon>Saccharomycetales</taxon>
        <taxon>Saccharomycetaceae</taxon>
        <taxon>Saccharomyces</taxon>
    </lineage>
</organism>
<name>YC204_YEAST</name>
<evidence type="ECO:0000255" key="1"/>
<evidence type="ECO:0000305" key="2"/>
<feature type="chain" id="PRO_0000248452" description="Uncharacterized protein YCR024C-B">
    <location>
        <begin position="1"/>
        <end position="88"/>
    </location>
</feature>
<feature type="transmembrane region" description="Helical" evidence="1">
    <location>
        <begin position="5"/>
        <end position="25"/>
    </location>
</feature>
<feature type="transmembrane region" description="Helical" evidence="1">
    <location>
        <begin position="36"/>
        <end position="56"/>
    </location>
</feature>
<keyword id="KW-0472">Membrane</keyword>
<keyword id="KW-1185">Reference proteome</keyword>
<keyword id="KW-0812">Transmembrane</keyword>
<keyword id="KW-1133">Transmembrane helix</keyword>
<accession>Q3E7Z8</accession>
<accession>D6VR34</accession>
<proteinExistence type="evidence at protein level"/>
<dbReference type="EMBL" id="X59720">
    <property type="status" value="NOT_ANNOTATED_CDS"/>
    <property type="molecule type" value="Genomic_DNA"/>
</dbReference>
<dbReference type="EMBL" id="BK006937">
    <property type="protein sequence ID" value="DAA07503.1"/>
    <property type="molecule type" value="Genomic_DNA"/>
</dbReference>
<dbReference type="RefSeq" id="NP_878057.1">
    <property type="nucleotide sequence ID" value="NM_001184645.1"/>
</dbReference>
<dbReference type="BioGRID" id="36944">
    <property type="interactions" value="41"/>
</dbReference>
<dbReference type="FunCoup" id="Q3E7Z8">
    <property type="interactions" value="37"/>
</dbReference>
<dbReference type="STRING" id="4932.YCR024C-B"/>
<dbReference type="PaxDb" id="4932-YCR024C-B"/>
<dbReference type="EnsemblFungi" id="YCR024C-B_mRNA">
    <property type="protein sequence ID" value="YCR024C-B"/>
    <property type="gene ID" value="YCR024C-B"/>
</dbReference>
<dbReference type="GeneID" id="1466398"/>
<dbReference type="KEGG" id="sce:YCR024C-B"/>
<dbReference type="AGR" id="SGD:S000028818"/>
<dbReference type="SGD" id="S000028818">
    <property type="gene designation" value="YCR024C-B"/>
</dbReference>
<dbReference type="VEuPathDB" id="FungiDB:YCR024C-B"/>
<dbReference type="HOGENOM" id="CLU_2470796_0_0_1"/>
<dbReference type="InParanoid" id="Q3E7Z8"/>
<dbReference type="BioCyc" id="YEAST:G3O-29427-MONOMER"/>
<dbReference type="BioGRID-ORCS" id="1466398">
    <property type="hits" value="4 hits in 10 CRISPR screens"/>
</dbReference>
<dbReference type="ChiTaRS" id="YCR024C-B">
    <property type="organism name" value="yeast"/>
</dbReference>
<dbReference type="PRO" id="PR:Q3E7Z8"/>
<dbReference type="Proteomes" id="UP000002311">
    <property type="component" value="Chromosome III"/>
</dbReference>
<dbReference type="RNAct" id="Q3E7Z8">
    <property type="molecule type" value="protein"/>
</dbReference>
<dbReference type="GO" id="GO:0016020">
    <property type="term" value="C:membrane"/>
    <property type="evidence" value="ECO:0007669"/>
    <property type="project" value="UniProtKB-SubCell"/>
</dbReference>
<gene>
    <name type="ordered locus">YCR024C-B</name>
</gene>
<comment type="subcellular location">
    <subcellularLocation>
        <location evidence="2">Membrane</location>
        <topology evidence="2">Multi-pass membrane protein</topology>
    </subcellularLocation>
</comment>
<sequence length="88" mass="10612">MCVCAIPFFEFFLPFIPHYAFLLFVSSVRFTVNERCYYLVCVLKLNCAFFFMVMIFELKRVCVSYLDRSRKIQIVSFFPFITIIFFHS</sequence>
<protein>
    <recommendedName>
        <fullName>Uncharacterized protein YCR024C-B</fullName>
    </recommendedName>
</protein>
<reference key="1">
    <citation type="journal article" date="1992" name="Nature">
        <title>The complete DNA sequence of yeast chromosome III.</title>
        <authorList>
            <person name="Oliver S.G."/>
            <person name="van der Aart Q.J.M."/>
            <person name="Agostoni-Carbone M.L."/>
            <person name="Aigle M."/>
            <person name="Alberghina L."/>
            <person name="Alexandraki D."/>
            <person name="Antoine G."/>
            <person name="Anwar R."/>
            <person name="Ballesta J.P.G."/>
            <person name="Benit P."/>
            <person name="Berben G."/>
            <person name="Bergantino E."/>
            <person name="Biteau N."/>
            <person name="Bolle P.-A."/>
            <person name="Bolotin-Fukuhara M."/>
            <person name="Brown A."/>
            <person name="Brown A.J.P."/>
            <person name="Buhler J.-M."/>
            <person name="Carcano C."/>
            <person name="Carignani G."/>
            <person name="Cederberg H."/>
            <person name="Chanet R."/>
            <person name="Contreras R."/>
            <person name="Crouzet M."/>
            <person name="Daignan-Fornier B."/>
            <person name="Defoor E."/>
            <person name="Delgado M.D."/>
            <person name="Demolder J."/>
            <person name="Doira C."/>
            <person name="Dubois E."/>
            <person name="Dujon B."/>
            <person name="Duesterhoeft A."/>
            <person name="Erdmann D."/>
            <person name="Esteban M."/>
            <person name="Fabre F."/>
            <person name="Fairhead C."/>
            <person name="Faye G."/>
            <person name="Feldmann H."/>
            <person name="Fiers W."/>
            <person name="Francingues-Gaillard M.-C."/>
            <person name="Franco L."/>
            <person name="Frontali L."/>
            <person name="Fukuhara H."/>
            <person name="Fuller L.J."/>
            <person name="Galland P."/>
            <person name="Gent M.E."/>
            <person name="Gigot D."/>
            <person name="Gilliquet V."/>
            <person name="Glansdorff N."/>
            <person name="Goffeau A."/>
            <person name="Grenson M."/>
            <person name="Grisanti P."/>
            <person name="Grivell L.A."/>
            <person name="de Haan M."/>
            <person name="Haasemann M."/>
            <person name="Hatat D."/>
            <person name="Hoenicka J."/>
            <person name="Hegemann J.H."/>
            <person name="Herbert C.J."/>
            <person name="Hilger F."/>
            <person name="Hohmann S."/>
            <person name="Hollenberg C.P."/>
            <person name="Huse K."/>
            <person name="Iborra F."/>
            <person name="Indge K.J."/>
            <person name="Isono K."/>
            <person name="Jacq C."/>
            <person name="Jacquet M."/>
            <person name="James C.M."/>
            <person name="Jauniaux J.-C."/>
            <person name="Jia Y."/>
            <person name="Jimenez A."/>
            <person name="Kelly A."/>
            <person name="Kleinhans U."/>
            <person name="Kreisl P."/>
            <person name="Lanfranchi G."/>
            <person name="Lewis C."/>
            <person name="van der Linden C.G."/>
            <person name="Lucchini G."/>
            <person name="Lutzenkirchen K."/>
            <person name="Maat M.J."/>
            <person name="Mallet L."/>
            <person name="Mannhaupt G."/>
            <person name="Martegani E."/>
            <person name="Mathieu A."/>
            <person name="Maurer C.T.C."/>
            <person name="McConnell D."/>
            <person name="McKee R.A."/>
            <person name="Messenguy F."/>
            <person name="Mewes H.-W."/>
            <person name="Molemans F."/>
            <person name="Montague M.A."/>
            <person name="Muzi Falconi M."/>
            <person name="Navas L."/>
            <person name="Newlon C.S."/>
            <person name="Noone D."/>
            <person name="Pallier C."/>
            <person name="Panzeri L."/>
            <person name="Pearson B.M."/>
            <person name="Perea J."/>
            <person name="Philippsen P."/>
            <person name="Pierard A."/>
            <person name="Planta R.J."/>
            <person name="Plevani P."/>
            <person name="Poetsch B."/>
            <person name="Pohl F.M."/>
            <person name="Purnelle B."/>
            <person name="Ramezani Rad M."/>
            <person name="Rasmussen S.W."/>
            <person name="Raynal A."/>
            <person name="Remacha M.A."/>
            <person name="Richterich P."/>
            <person name="Roberts A.B."/>
            <person name="Rodriguez F."/>
            <person name="Sanz E."/>
            <person name="Schaaff-Gerstenschlaeger I."/>
            <person name="Scherens B."/>
            <person name="Schweitzer B."/>
            <person name="Shu Y."/>
            <person name="Skala J."/>
            <person name="Slonimski P.P."/>
            <person name="Sor F."/>
            <person name="Soustelle C."/>
            <person name="Spiegelberg R."/>
            <person name="Stateva L.I."/>
            <person name="Steensma H.Y."/>
            <person name="Steiner S."/>
            <person name="Thierry A."/>
            <person name="Thireos G."/>
            <person name="Tzermia M."/>
            <person name="Urrestarazu L.A."/>
            <person name="Valle G."/>
            <person name="Vetter I."/>
            <person name="van Vliet-Reedijk J.C."/>
            <person name="Voet M."/>
            <person name="Volckaert G."/>
            <person name="Vreken P."/>
            <person name="Wang H."/>
            <person name="Warmington J.R."/>
            <person name="von Wettstein D."/>
            <person name="Wicksteed B.L."/>
            <person name="Wilson C."/>
            <person name="Wurst H."/>
            <person name="Xu G."/>
            <person name="Yoshikawa A."/>
            <person name="Zimmermann F.K."/>
            <person name="Sgouros J.G."/>
        </authorList>
    </citation>
    <scope>NUCLEOTIDE SEQUENCE [LARGE SCALE GENOMIC DNA]</scope>
    <source>
        <strain>ATCC 204508 / S288c</strain>
    </source>
</reference>
<reference key="2">
    <citation type="journal article" date="2014" name="G3 (Bethesda)">
        <title>The reference genome sequence of Saccharomyces cerevisiae: Then and now.</title>
        <authorList>
            <person name="Engel S.R."/>
            <person name="Dietrich F.S."/>
            <person name="Fisk D.G."/>
            <person name="Binkley G."/>
            <person name="Balakrishnan R."/>
            <person name="Costanzo M.C."/>
            <person name="Dwight S.S."/>
            <person name="Hitz B.C."/>
            <person name="Karra K."/>
            <person name="Nash R.S."/>
            <person name="Weng S."/>
            <person name="Wong E.D."/>
            <person name="Lloyd P."/>
            <person name="Skrzypek M.S."/>
            <person name="Miyasato S.R."/>
            <person name="Simison M."/>
            <person name="Cherry J.M."/>
        </authorList>
    </citation>
    <scope>GENOME REANNOTATION</scope>
    <source>
        <strain>ATCC 204508 / S288c</strain>
    </source>
</reference>
<reference key="3">
    <citation type="journal article" date="2002" name="Genome Res.">
        <title>Parallel identification of new genes in Saccharomyces cerevisiae.</title>
        <authorList>
            <person name="Oshiro G."/>
            <person name="Wodicka L.M."/>
            <person name="Washburn M.P."/>
            <person name="Yates J.R. III"/>
            <person name="Lockhart D.J."/>
            <person name="Winzeler E.A."/>
        </authorList>
    </citation>
    <scope>IDENTIFICATION BY MASS SPECTROMETRY</scope>
</reference>